<sequence length="40" mass="4137">MADTTGRIPLWLIGTVTGIPVIGSMGIFFYGSYSGLGSSL</sequence>
<comment type="function">
    <text evidence="1">One of the components of the core complex of photosystem II (PSII). PSII is a light-driven water:plastoquinone oxidoreductase that uses light energy to abstract electrons from H(2)O, generating O(2) and a proton gradient subsequently used for ATP formation. It consists of a core antenna complex that captures photons, and an electron transfer chain that converts photonic excitation into a charge separation.</text>
</comment>
<comment type="subunit">
    <text evidence="1">PSII is composed of 1 copy each of membrane proteins PsbA, PsbB, PsbC, PsbD, PsbE, PsbF, PsbH, PsbI, PsbJ, PsbK, PsbL, PsbM, PsbT, PsbX, PsbY, PsbZ, Psb30/Ycf12, at least 3 peripheral proteins of the oxygen-evolving complex and a large number of cofactors. It forms dimeric complexes.</text>
</comment>
<comment type="subcellular location">
    <subcellularLocation>
        <location evidence="1">Plastid</location>
        <location evidence="1">Chloroplast thylakoid membrane</location>
        <topology evidence="1">Single-pass membrane protein</topology>
    </subcellularLocation>
</comment>
<comment type="similarity">
    <text evidence="1">Belongs to the PsbJ family.</text>
</comment>
<keyword id="KW-0150">Chloroplast</keyword>
<keyword id="KW-0472">Membrane</keyword>
<keyword id="KW-0602">Photosynthesis</keyword>
<keyword id="KW-0604">Photosystem II</keyword>
<keyword id="KW-0934">Plastid</keyword>
<keyword id="KW-0674">Reaction center</keyword>
<keyword id="KW-1185">Reference proteome</keyword>
<keyword id="KW-0793">Thylakoid</keyword>
<keyword id="KW-0812">Transmembrane</keyword>
<keyword id="KW-1133">Transmembrane helix</keyword>
<name>PSBJ_AMBTC</name>
<dbReference type="EMBL" id="AJ506156">
    <property type="protein sequence ID" value="CAD45121.1"/>
    <property type="molecule type" value="Genomic_DNA"/>
</dbReference>
<dbReference type="RefSeq" id="NP_904113.1">
    <property type="nucleotide sequence ID" value="NC_005086.1"/>
</dbReference>
<dbReference type="SMR" id="P60247"/>
<dbReference type="STRING" id="13333.P60247"/>
<dbReference type="GeneID" id="2546569"/>
<dbReference type="KEGG" id="atr:2546569"/>
<dbReference type="Proteomes" id="UP000017836">
    <property type="component" value="Chloroplast"/>
</dbReference>
<dbReference type="GO" id="GO:0009535">
    <property type="term" value="C:chloroplast thylakoid membrane"/>
    <property type="evidence" value="ECO:0007669"/>
    <property type="project" value="UniProtKB-SubCell"/>
</dbReference>
<dbReference type="GO" id="GO:0009523">
    <property type="term" value="C:photosystem II"/>
    <property type="evidence" value="ECO:0000318"/>
    <property type="project" value="GO_Central"/>
</dbReference>
<dbReference type="GO" id="GO:0009539">
    <property type="term" value="C:photosystem II reaction center"/>
    <property type="evidence" value="ECO:0007669"/>
    <property type="project" value="InterPro"/>
</dbReference>
<dbReference type="GO" id="GO:0015979">
    <property type="term" value="P:photosynthesis"/>
    <property type="evidence" value="ECO:0007669"/>
    <property type="project" value="UniProtKB-UniRule"/>
</dbReference>
<dbReference type="Gene3D" id="6.10.250.2070">
    <property type="match status" value="1"/>
</dbReference>
<dbReference type="HAMAP" id="MF_01305">
    <property type="entry name" value="PSII_PsbJ"/>
    <property type="match status" value="1"/>
</dbReference>
<dbReference type="InterPro" id="IPR002682">
    <property type="entry name" value="PSII_PsbJ"/>
</dbReference>
<dbReference type="InterPro" id="IPR037267">
    <property type="entry name" value="PSII_PsbJ_sf"/>
</dbReference>
<dbReference type="NCBIfam" id="NF002722">
    <property type="entry name" value="PRK02565.1"/>
    <property type="match status" value="1"/>
</dbReference>
<dbReference type="PANTHER" id="PTHR34812">
    <property type="entry name" value="PHOTOSYSTEM II REACTION CENTER PROTEIN J"/>
    <property type="match status" value="1"/>
</dbReference>
<dbReference type="PANTHER" id="PTHR34812:SF3">
    <property type="entry name" value="PHOTOSYSTEM II REACTION CENTER PROTEIN J"/>
    <property type="match status" value="1"/>
</dbReference>
<dbReference type="Pfam" id="PF01788">
    <property type="entry name" value="PsbJ"/>
    <property type="match status" value="1"/>
</dbReference>
<dbReference type="SUPFAM" id="SSF161021">
    <property type="entry name" value="Photosystem II reaction center protein J, PsbJ"/>
    <property type="match status" value="1"/>
</dbReference>
<protein>
    <recommendedName>
        <fullName evidence="1">Photosystem II reaction center protein J</fullName>
        <shortName evidence="1">PSII-J</shortName>
    </recommendedName>
</protein>
<gene>
    <name evidence="1" type="primary">psbJ</name>
</gene>
<evidence type="ECO:0000255" key="1">
    <source>
        <dbReference type="HAMAP-Rule" id="MF_01305"/>
    </source>
</evidence>
<feature type="chain" id="PRO_0000216577" description="Photosystem II reaction center protein J">
    <location>
        <begin position="1"/>
        <end position="40"/>
    </location>
</feature>
<feature type="transmembrane region" description="Helical" evidence="1">
    <location>
        <begin position="8"/>
        <end position="28"/>
    </location>
</feature>
<accession>P60247</accession>
<geneLocation type="chloroplast"/>
<organism>
    <name type="scientific">Amborella trichopoda</name>
    <dbReference type="NCBI Taxonomy" id="13333"/>
    <lineage>
        <taxon>Eukaryota</taxon>
        <taxon>Viridiplantae</taxon>
        <taxon>Streptophyta</taxon>
        <taxon>Embryophyta</taxon>
        <taxon>Tracheophyta</taxon>
        <taxon>Spermatophyta</taxon>
        <taxon>Magnoliopsida</taxon>
        <taxon>Amborellales</taxon>
        <taxon>Amborellaceae</taxon>
        <taxon>Amborella</taxon>
    </lineage>
</organism>
<reference key="1">
    <citation type="journal article" date="2003" name="Mol. Biol. Evol.">
        <title>Analysis of the Amborella trichopoda chloroplast genome sequence suggests that Amborella is not a basal angiosperm.</title>
        <authorList>
            <person name="Goremykin V.V."/>
            <person name="Hirsch-Ernst K.I."/>
            <person name="Wolfl S."/>
            <person name="Hellwig F.H."/>
        </authorList>
    </citation>
    <scope>NUCLEOTIDE SEQUENCE [LARGE SCALE GENOMIC DNA]</scope>
</reference>
<proteinExistence type="inferred from homology"/>